<evidence type="ECO:0000255" key="1">
    <source>
        <dbReference type="HAMAP-Rule" id="MF_00181"/>
    </source>
</evidence>
<accession>A0RKB5</accession>
<feature type="chain" id="PRO_1000019882" description="Probable cytosol aminopeptidase">
    <location>
        <begin position="1"/>
        <end position="494"/>
    </location>
</feature>
<feature type="active site" evidence="1">
    <location>
        <position position="272"/>
    </location>
</feature>
<feature type="active site" evidence="1">
    <location>
        <position position="346"/>
    </location>
</feature>
<feature type="binding site" evidence="1">
    <location>
        <position position="260"/>
    </location>
    <ligand>
        <name>Mn(2+)</name>
        <dbReference type="ChEBI" id="CHEBI:29035"/>
        <label>2</label>
    </ligand>
</feature>
<feature type="binding site" evidence="1">
    <location>
        <position position="265"/>
    </location>
    <ligand>
        <name>Mn(2+)</name>
        <dbReference type="ChEBI" id="CHEBI:29035"/>
        <label>1</label>
    </ligand>
</feature>
<feature type="binding site" evidence="1">
    <location>
        <position position="265"/>
    </location>
    <ligand>
        <name>Mn(2+)</name>
        <dbReference type="ChEBI" id="CHEBI:29035"/>
        <label>2</label>
    </ligand>
</feature>
<feature type="binding site" evidence="1">
    <location>
        <position position="283"/>
    </location>
    <ligand>
        <name>Mn(2+)</name>
        <dbReference type="ChEBI" id="CHEBI:29035"/>
        <label>2</label>
    </ligand>
</feature>
<feature type="binding site" evidence="1">
    <location>
        <position position="342"/>
    </location>
    <ligand>
        <name>Mn(2+)</name>
        <dbReference type="ChEBI" id="CHEBI:29035"/>
        <label>1</label>
    </ligand>
</feature>
<feature type="binding site" evidence="1">
    <location>
        <position position="344"/>
    </location>
    <ligand>
        <name>Mn(2+)</name>
        <dbReference type="ChEBI" id="CHEBI:29035"/>
        <label>1</label>
    </ligand>
</feature>
<feature type="binding site" evidence="1">
    <location>
        <position position="344"/>
    </location>
    <ligand>
        <name>Mn(2+)</name>
        <dbReference type="ChEBI" id="CHEBI:29035"/>
        <label>2</label>
    </ligand>
</feature>
<keyword id="KW-0031">Aminopeptidase</keyword>
<keyword id="KW-0963">Cytoplasm</keyword>
<keyword id="KW-0378">Hydrolase</keyword>
<keyword id="KW-0464">Manganese</keyword>
<keyword id="KW-0479">Metal-binding</keyword>
<keyword id="KW-0645">Protease</keyword>
<organism>
    <name type="scientific">Bacillus thuringiensis (strain Al Hakam)</name>
    <dbReference type="NCBI Taxonomy" id="412694"/>
    <lineage>
        <taxon>Bacteria</taxon>
        <taxon>Bacillati</taxon>
        <taxon>Bacillota</taxon>
        <taxon>Bacilli</taxon>
        <taxon>Bacillales</taxon>
        <taxon>Bacillaceae</taxon>
        <taxon>Bacillus</taxon>
        <taxon>Bacillus cereus group</taxon>
    </lineage>
</organism>
<gene>
    <name evidence="1" type="primary">pepA</name>
    <name type="ordered locus">BALH_4461</name>
</gene>
<name>AMPA_BACAH</name>
<proteinExistence type="inferred from homology"/>
<dbReference type="EC" id="3.4.11.1" evidence="1"/>
<dbReference type="EC" id="3.4.11.10" evidence="1"/>
<dbReference type="EMBL" id="CP000485">
    <property type="protein sequence ID" value="ABK87658.1"/>
    <property type="molecule type" value="Genomic_DNA"/>
</dbReference>
<dbReference type="RefSeq" id="WP_000487987.1">
    <property type="nucleotide sequence ID" value="NC_008600.1"/>
</dbReference>
<dbReference type="SMR" id="A0RKB5"/>
<dbReference type="MEROPS" id="M17.010"/>
<dbReference type="KEGG" id="btl:BALH_4461"/>
<dbReference type="HOGENOM" id="CLU_013734_6_0_9"/>
<dbReference type="GO" id="GO:0005737">
    <property type="term" value="C:cytoplasm"/>
    <property type="evidence" value="ECO:0007669"/>
    <property type="project" value="UniProtKB-SubCell"/>
</dbReference>
<dbReference type="GO" id="GO:0030145">
    <property type="term" value="F:manganese ion binding"/>
    <property type="evidence" value="ECO:0007669"/>
    <property type="project" value="UniProtKB-UniRule"/>
</dbReference>
<dbReference type="GO" id="GO:0070006">
    <property type="term" value="F:metalloaminopeptidase activity"/>
    <property type="evidence" value="ECO:0007669"/>
    <property type="project" value="InterPro"/>
</dbReference>
<dbReference type="GO" id="GO:0006508">
    <property type="term" value="P:proteolysis"/>
    <property type="evidence" value="ECO:0007669"/>
    <property type="project" value="UniProtKB-KW"/>
</dbReference>
<dbReference type="CDD" id="cd00433">
    <property type="entry name" value="Peptidase_M17"/>
    <property type="match status" value="1"/>
</dbReference>
<dbReference type="Gene3D" id="3.40.220.10">
    <property type="entry name" value="Leucine Aminopeptidase, subunit E, domain 1"/>
    <property type="match status" value="1"/>
</dbReference>
<dbReference type="Gene3D" id="3.40.630.10">
    <property type="entry name" value="Zn peptidases"/>
    <property type="match status" value="1"/>
</dbReference>
<dbReference type="HAMAP" id="MF_00181">
    <property type="entry name" value="Cytosol_peptidase_M17"/>
    <property type="match status" value="1"/>
</dbReference>
<dbReference type="InterPro" id="IPR011356">
    <property type="entry name" value="Leucine_aapep/pepB"/>
</dbReference>
<dbReference type="InterPro" id="IPR043472">
    <property type="entry name" value="Macro_dom-like"/>
</dbReference>
<dbReference type="InterPro" id="IPR000819">
    <property type="entry name" value="Peptidase_M17_C"/>
</dbReference>
<dbReference type="InterPro" id="IPR023042">
    <property type="entry name" value="Peptidase_M17_leu_NH2_pept"/>
</dbReference>
<dbReference type="InterPro" id="IPR008283">
    <property type="entry name" value="Peptidase_M17_N"/>
</dbReference>
<dbReference type="NCBIfam" id="NF002073">
    <property type="entry name" value="PRK00913.1-2"/>
    <property type="match status" value="1"/>
</dbReference>
<dbReference type="NCBIfam" id="NF002074">
    <property type="entry name" value="PRK00913.1-4"/>
    <property type="match status" value="1"/>
</dbReference>
<dbReference type="NCBIfam" id="NF002083">
    <property type="entry name" value="PRK00913.3-5"/>
    <property type="match status" value="1"/>
</dbReference>
<dbReference type="PANTHER" id="PTHR11963:SF23">
    <property type="entry name" value="CYTOSOL AMINOPEPTIDASE"/>
    <property type="match status" value="1"/>
</dbReference>
<dbReference type="PANTHER" id="PTHR11963">
    <property type="entry name" value="LEUCINE AMINOPEPTIDASE-RELATED"/>
    <property type="match status" value="1"/>
</dbReference>
<dbReference type="Pfam" id="PF00883">
    <property type="entry name" value="Peptidase_M17"/>
    <property type="match status" value="1"/>
</dbReference>
<dbReference type="Pfam" id="PF02789">
    <property type="entry name" value="Peptidase_M17_N"/>
    <property type="match status" value="1"/>
</dbReference>
<dbReference type="PRINTS" id="PR00481">
    <property type="entry name" value="LAMNOPPTDASE"/>
</dbReference>
<dbReference type="SUPFAM" id="SSF52949">
    <property type="entry name" value="Macro domain-like"/>
    <property type="match status" value="1"/>
</dbReference>
<dbReference type="SUPFAM" id="SSF53187">
    <property type="entry name" value="Zn-dependent exopeptidases"/>
    <property type="match status" value="1"/>
</dbReference>
<dbReference type="PROSITE" id="PS00631">
    <property type="entry name" value="CYTOSOL_AP"/>
    <property type="match status" value="1"/>
</dbReference>
<sequence>MFQVQKELASHEAVVVALFEEEKTSSFVQELDKAFEGQLQVLLEEKELSTKKKAISKVHSLGKTDVKRYYFVGLGKKESYTTETLRSALGKTFKTLQAAKVQDAAILLDSFVTEKLDAIDVAHIAAEVQGLGTYELQTYKSDKKDRVKLEKFTAITAEDAQEIEAALTVGYVHGRATNSARTLVNMPPNVLTATKLAEYAVELAEKYDMDYKVLEKEEMEELGMGALLAVNQGSVEPPKMIALIYKGKEEWTDVIGFVGKGITYDTGGYSLKPREGMVGMKGDMGGAAAVLGAMEIIGELRPEQNVIAVIPSTDNVVSGTAFKPDDVITSMSGKTIEVLNTDAEGRLALADGITYAKKLGANYLIDVATLTGGVIVALGNHTTGAMTNNEELFEQVLEASMETDESIWQLPIFDRDKERVRNSKFADLNNSPGREGHAVMAGTFIGEFAEDTPWVHLDIAGTSESSGAHDLGPAGATGAMVRTLATLVERFGEE</sequence>
<comment type="function">
    <text evidence="1">Presumably involved in the processing and regular turnover of intracellular proteins. Catalyzes the removal of unsubstituted N-terminal amino acids from various peptides.</text>
</comment>
<comment type="catalytic activity">
    <reaction evidence="1">
        <text>Release of an N-terminal amino acid, Xaa-|-Yaa-, in which Xaa is preferably Leu, but may be other amino acids including Pro although not Arg or Lys, and Yaa may be Pro. Amino acid amides and methyl esters are also readily hydrolyzed, but rates on arylamides are exceedingly low.</text>
        <dbReference type="EC" id="3.4.11.1"/>
    </reaction>
</comment>
<comment type="catalytic activity">
    <reaction evidence="1">
        <text>Release of an N-terminal amino acid, preferentially leucine, but not glutamic or aspartic acids.</text>
        <dbReference type="EC" id="3.4.11.10"/>
    </reaction>
</comment>
<comment type="cofactor">
    <cofactor evidence="1">
        <name>Mn(2+)</name>
        <dbReference type="ChEBI" id="CHEBI:29035"/>
    </cofactor>
    <text evidence="1">Binds 2 manganese ions per subunit.</text>
</comment>
<comment type="subcellular location">
    <subcellularLocation>
        <location evidence="1">Cytoplasm</location>
    </subcellularLocation>
</comment>
<comment type="similarity">
    <text evidence="1">Belongs to the peptidase M17 family.</text>
</comment>
<reference key="1">
    <citation type="journal article" date="2007" name="J. Bacteriol.">
        <title>The complete genome sequence of Bacillus thuringiensis Al Hakam.</title>
        <authorList>
            <person name="Challacombe J.F."/>
            <person name="Altherr M.R."/>
            <person name="Xie G."/>
            <person name="Bhotika S.S."/>
            <person name="Brown N."/>
            <person name="Bruce D."/>
            <person name="Campbell C.S."/>
            <person name="Campbell M.L."/>
            <person name="Chen J."/>
            <person name="Chertkov O."/>
            <person name="Cleland C."/>
            <person name="Dimitrijevic M."/>
            <person name="Doggett N.A."/>
            <person name="Fawcett J.J."/>
            <person name="Glavina T."/>
            <person name="Goodwin L.A."/>
            <person name="Green L.D."/>
            <person name="Han C.S."/>
            <person name="Hill K.K."/>
            <person name="Hitchcock P."/>
            <person name="Jackson P.J."/>
            <person name="Keim P."/>
            <person name="Kewalramani A.R."/>
            <person name="Longmire J."/>
            <person name="Lucas S."/>
            <person name="Malfatti S."/>
            <person name="Martinez D."/>
            <person name="McMurry K."/>
            <person name="Meincke L.J."/>
            <person name="Misra M."/>
            <person name="Moseman B.L."/>
            <person name="Mundt M."/>
            <person name="Munk A.C."/>
            <person name="Okinaka R.T."/>
            <person name="Parson-Quintana B."/>
            <person name="Reilly L.P."/>
            <person name="Richardson P."/>
            <person name="Robinson D.L."/>
            <person name="Saunders E."/>
            <person name="Tapia R."/>
            <person name="Tesmer J.G."/>
            <person name="Thayer N."/>
            <person name="Thompson L.S."/>
            <person name="Tice H."/>
            <person name="Ticknor L.O."/>
            <person name="Wills P.L."/>
            <person name="Gilna P."/>
            <person name="Brettin T.S."/>
        </authorList>
    </citation>
    <scope>NUCLEOTIDE SEQUENCE [LARGE SCALE GENOMIC DNA]</scope>
    <source>
        <strain>Al Hakam</strain>
    </source>
</reference>
<protein>
    <recommendedName>
        <fullName evidence="1">Probable cytosol aminopeptidase</fullName>
        <ecNumber evidence="1">3.4.11.1</ecNumber>
    </recommendedName>
    <alternativeName>
        <fullName evidence="1">Leucine aminopeptidase</fullName>
        <shortName evidence="1">LAP</shortName>
        <ecNumber evidence="1">3.4.11.10</ecNumber>
    </alternativeName>
    <alternativeName>
        <fullName evidence="1">Leucyl aminopeptidase</fullName>
    </alternativeName>
</protein>